<proteinExistence type="inferred from homology"/>
<comment type="function">
    <text evidence="1">Part of the binding-protein-dependent transport system for heme-iron. Responsible for the translocation of the substrate across the membrane (By similarity).</text>
</comment>
<comment type="subcellular location">
    <subcellularLocation>
        <location evidence="3">Cell membrane</location>
        <topology evidence="3">Multi-pass membrane protein</topology>
    </subcellularLocation>
</comment>
<comment type="induction">
    <text evidence="1">Repressed by fur in the presence of iron.</text>
</comment>
<comment type="similarity">
    <text evidence="3">Belongs to the binding-protein-dependent transport system permease family. FecCD subfamily.</text>
</comment>
<reference key="1">
    <citation type="journal article" date="2004" name="Proc. Natl. Acad. Sci. U.S.A.">
        <title>Complete genomes of two clinical Staphylococcus aureus strains: evidence for the rapid evolution of virulence and drug resistance.</title>
        <authorList>
            <person name="Holden M.T.G."/>
            <person name="Feil E.J."/>
            <person name="Lindsay J.A."/>
            <person name="Peacock S.J."/>
            <person name="Day N.P.J."/>
            <person name="Enright M.C."/>
            <person name="Foster T.J."/>
            <person name="Moore C.E."/>
            <person name="Hurst L."/>
            <person name="Atkin R."/>
            <person name="Barron A."/>
            <person name="Bason N."/>
            <person name="Bentley S.D."/>
            <person name="Chillingworth C."/>
            <person name="Chillingworth T."/>
            <person name="Churcher C."/>
            <person name="Clark L."/>
            <person name="Corton C."/>
            <person name="Cronin A."/>
            <person name="Doggett J."/>
            <person name="Dowd L."/>
            <person name="Feltwell T."/>
            <person name="Hance Z."/>
            <person name="Harris B."/>
            <person name="Hauser H."/>
            <person name="Holroyd S."/>
            <person name="Jagels K."/>
            <person name="James K.D."/>
            <person name="Lennard N."/>
            <person name="Line A."/>
            <person name="Mayes R."/>
            <person name="Moule S."/>
            <person name="Mungall K."/>
            <person name="Ormond D."/>
            <person name="Quail M.A."/>
            <person name="Rabbinowitsch E."/>
            <person name="Rutherford K.M."/>
            <person name="Sanders M."/>
            <person name="Sharp S."/>
            <person name="Simmonds M."/>
            <person name="Stevens K."/>
            <person name="Whitehead S."/>
            <person name="Barrell B.G."/>
            <person name="Spratt B.G."/>
            <person name="Parkhill J."/>
        </authorList>
    </citation>
    <scope>NUCLEOTIDE SEQUENCE [LARGE SCALE GENOMIC DNA]</scope>
    <source>
        <strain>MSSA476</strain>
    </source>
</reference>
<feature type="chain" id="PRO_0000372467" description="Probable heme-iron transport system permease protein IsdF">
    <location>
        <begin position="1"/>
        <end position="322"/>
    </location>
</feature>
<feature type="transmembrane region" description="Helical" evidence="2">
    <location>
        <begin position="9"/>
        <end position="29"/>
    </location>
</feature>
<feature type="transmembrane region" description="Helical" evidence="2">
    <location>
        <begin position="61"/>
        <end position="81"/>
    </location>
</feature>
<feature type="transmembrane region" description="Helical" evidence="2">
    <location>
        <begin position="89"/>
        <end position="109"/>
    </location>
</feature>
<feature type="transmembrane region" description="Helical" evidence="2">
    <location>
        <begin position="114"/>
        <end position="134"/>
    </location>
</feature>
<feature type="transmembrane region" description="Helical" evidence="2">
    <location>
        <begin position="143"/>
        <end position="163"/>
    </location>
</feature>
<feature type="transmembrane region" description="Helical" evidence="2">
    <location>
        <begin position="179"/>
        <end position="199"/>
    </location>
</feature>
<feature type="transmembrane region" description="Helical" evidence="2">
    <location>
        <begin position="233"/>
        <end position="253"/>
    </location>
</feature>
<feature type="transmembrane region" description="Helical" evidence="2">
    <location>
        <begin position="267"/>
        <end position="287"/>
    </location>
</feature>
<feature type="transmembrane region" description="Helical" evidence="2">
    <location>
        <begin position="294"/>
        <end position="314"/>
    </location>
</feature>
<protein>
    <recommendedName>
        <fullName>Probable heme-iron transport system permease protein IsdF</fullName>
    </recommendedName>
    <alternativeName>
        <fullName>Iron-regulated surface determinant protein F</fullName>
    </alternativeName>
    <alternativeName>
        <fullName>Staphylococcal iron-regulated protein G</fullName>
    </alternativeName>
</protein>
<evidence type="ECO:0000250" key="1"/>
<evidence type="ECO:0000255" key="2"/>
<evidence type="ECO:0000305" key="3"/>
<gene>
    <name type="primary">isdF</name>
    <name type="synonym">sirG</name>
    <name type="ordered locus">SAS1068</name>
</gene>
<name>ISDF_STAAS</name>
<sequence>MMIKNKKKLLFLCLLVILIATAYISFVTGTIKLSFNDLITKFTTGNNEAVDSIIDLRLPRILIALMVGAMLAVSGALLQAALQNPLAEANIIGVSSGALIMRALCMLFIPQLYFYLPLLSFIGGLIPFLIIILLHSKFRFNAVSMILVGVALFVLLNGVLEILTQNPLMKIPQGLTMKIWSDVYILAVSALLGLILTLLLSPKLNLLNLDDIQARSIGFNIDRYRWLTGLLAVFLASATVAIVGQLAFLGIIVPHVVRKLVGGNYRVLIPFSTVIGAWLLLVADLLGRVIQPPLEIPANAILMIVGGPMLIYLICQSQRNRI</sequence>
<keyword id="KW-1003">Cell membrane</keyword>
<keyword id="KW-0408">Iron</keyword>
<keyword id="KW-0472">Membrane</keyword>
<keyword id="KW-0812">Transmembrane</keyword>
<keyword id="KW-1133">Transmembrane helix</keyword>
<keyword id="KW-0813">Transport</keyword>
<organism>
    <name type="scientific">Staphylococcus aureus (strain MSSA476)</name>
    <dbReference type="NCBI Taxonomy" id="282459"/>
    <lineage>
        <taxon>Bacteria</taxon>
        <taxon>Bacillati</taxon>
        <taxon>Bacillota</taxon>
        <taxon>Bacilli</taxon>
        <taxon>Bacillales</taxon>
        <taxon>Staphylococcaceae</taxon>
        <taxon>Staphylococcus</taxon>
    </lineage>
</organism>
<dbReference type="EMBL" id="BX571857">
    <property type="protein sequence ID" value="CAG42842.1"/>
    <property type="molecule type" value="Genomic_DNA"/>
</dbReference>
<dbReference type="SMR" id="Q6GA81"/>
<dbReference type="KEGG" id="sas:SAS1068"/>
<dbReference type="HOGENOM" id="CLU_013016_1_1_9"/>
<dbReference type="GO" id="GO:0005886">
    <property type="term" value="C:plasma membrane"/>
    <property type="evidence" value="ECO:0007669"/>
    <property type="project" value="UniProtKB-SubCell"/>
</dbReference>
<dbReference type="GO" id="GO:0022857">
    <property type="term" value="F:transmembrane transporter activity"/>
    <property type="evidence" value="ECO:0007669"/>
    <property type="project" value="InterPro"/>
</dbReference>
<dbReference type="GO" id="GO:0033214">
    <property type="term" value="P:siderophore-dependent iron import into cell"/>
    <property type="evidence" value="ECO:0007669"/>
    <property type="project" value="TreeGrafter"/>
</dbReference>
<dbReference type="CDD" id="cd06550">
    <property type="entry name" value="TM_ABC_iron-siderophores_like"/>
    <property type="match status" value="1"/>
</dbReference>
<dbReference type="FunFam" id="1.10.3470.10:FF:000001">
    <property type="entry name" value="Vitamin B12 ABC transporter permease BtuC"/>
    <property type="match status" value="1"/>
</dbReference>
<dbReference type="Gene3D" id="1.10.3470.10">
    <property type="entry name" value="ABC transporter involved in vitamin B12 uptake, BtuC"/>
    <property type="match status" value="1"/>
</dbReference>
<dbReference type="InterPro" id="IPR037294">
    <property type="entry name" value="ABC_BtuC-like"/>
</dbReference>
<dbReference type="InterPro" id="IPR000522">
    <property type="entry name" value="ABC_transptr_permease_BtuC"/>
</dbReference>
<dbReference type="PANTHER" id="PTHR30472">
    <property type="entry name" value="FERRIC ENTEROBACTIN TRANSPORT SYSTEM PERMEASE PROTEIN"/>
    <property type="match status" value="1"/>
</dbReference>
<dbReference type="PANTHER" id="PTHR30472:SF21">
    <property type="entry name" value="HEME-IRON TRANSPORT SYSTEM PERMEASE PROTEIN ISDF-RELATED"/>
    <property type="match status" value="1"/>
</dbReference>
<dbReference type="Pfam" id="PF01032">
    <property type="entry name" value="FecCD"/>
    <property type="match status" value="1"/>
</dbReference>
<dbReference type="SUPFAM" id="SSF81345">
    <property type="entry name" value="ABC transporter involved in vitamin B12 uptake, BtuC"/>
    <property type="match status" value="1"/>
</dbReference>
<accession>Q6GA81</accession>